<sequence length="803" mass="87229">MNAPVQDAEARELALAGMRPRACAKEDARFIQGKGNYVDDIKMPGMLHMDIVRAPIAHGRIKKIHKDAALAMPGVHAVLTAEDLKPLKLHWMPTLAGDVAAVLADEKVHFQMQEVAIVIADDRYIAADAVEAVKVEYDELPVVIDPIDALKPDAPVLREDLAGKTSGAHGPREHHNHIFTWGAGDKAATDAVFANAPVTVSQHMYYPRVHPCPLETCGCVASFDPIKGDLTTYITSQAPHVVRTVVSMLSGIPESKVRIVSPDIGGGFGNKVGIYPGYVCAIVASIVLGRPVKWVEDRVENISTTAFARDYHMDGELAATPDGKILGLRVNVVADHGAFDACADPTKFPAGLFHICSGSYDIPRAHCSVKGVYTNKAPGGVAYRCSFRVTEAVYLIERMVDVLAQKLNMDKAEIRAKNFIRKEQFPYTTQFGFEYDSGDYHTALKKVLDAVDYPAWRAEQAARRADPNSPTLMGIGLVTFTEVVGAGPSKMCDILGVGMFDSCEIRIHPTGSAIARMGTITQGQGHQTTYAQIIATELGIPSEVIQVEEGDTSTAPYGLGTYGSRSTPVAGAAIALAARKIHAKARKIAAHMLEVNENDLDWEVDRFKVKGDDSKFKTMADIAWQAYHQPPAGLEPGLEAVHYYDPPNFTYPFGIYLCVVDIDRATGETKVRRFYALDDCGTRINPMIIEGQIHGGLTEGYAVAMGQQMPFDAQGNLLGNTLMDYFLPTAVETPHWETDHTVTPSPHHPIGAKGVAESPHVGSIPTFTAAVVDAFAHVGVTHLDMPHTSYRVWKSLKEHNLAL</sequence>
<name>DCML_HYDPS</name>
<reference key="1">
    <citation type="journal article" date="1999" name="J. Bacteriol.">
        <title>Cloning and molecular characterization of the genes for carbon monoxide dehydrogenase and localization of molybdopterin, flavin adenine dinucleotide, and iron-sulfur centers in the enzyme of Hydrogenophaga pseudoflava.</title>
        <authorList>
            <person name="Kang B.S."/>
            <person name="Kim Y.M."/>
        </authorList>
    </citation>
    <scope>NUCLEOTIDE SEQUENCE [GENOMIC DNA]</scope>
    <scope>COFACTOR</scope>
    <scope>SUBUNIT</scope>
</reference>
<reference key="2">
    <citation type="journal article" date="1989" name="Arch. Microbiol.">
        <title>Homology and distribution of CO dehydrogenase structural genes in carboxydotrophic bacteria.</title>
        <authorList>
            <person name="Kraut M."/>
            <person name="Hugendieck I."/>
            <person name="Herwig S."/>
            <person name="Meyer O."/>
        </authorList>
    </citation>
    <scope>PROTEIN SEQUENCE OF 1-9</scope>
</reference>
<reference key="3">
    <citation type="journal article" date="2000" name="J. Mol. Biol.">
        <title>The effect of intracellular molybdenum in Hydrogenophaga pseudoflava on the crystallographic structure of the seleno-molybdo-iron-sulfur flavoenzyme carbon monoxide dehydrogenase.</title>
        <authorList>
            <person name="Haenzelmann P."/>
            <person name="Dobbek H."/>
            <person name="Gremer L."/>
            <person name="Huber R."/>
            <person name="Meyer O."/>
        </authorList>
    </citation>
    <scope>X-RAY CRYSTALLOGRAPHY (2.25 ANGSTROMS)</scope>
    <scope>HYDROXYLATION AT ARG-384</scope>
</reference>
<reference key="4">
    <citation type="journal article" date="2000" name="Biol. Chem.">
        <title>The role of Se, Mo and Fe in the structure and function of carbon monoxide dehydrogenase.</title>
        <authorList>
            <person name="Meyer O."/>
            <person name="Gremer L."/>
            <person name="Ferner R."/>
            <person name="Ferner M."/>
            <person name="Dobbek H."/>
            <person name="Gnida M."/>
            <person name="Meyer-Klaucke W."/>
            <person name="Huber R."/>
        </authorList>
    </citation>
    <scope>REVIEW</scope>
</reference>
<feature type="chain" id="PRO_0000079809" description="Carbon monoxide dehydrogenase large chain">
    <location>
        <begin position="1"/>
        <end position="803"/>
    </location>
</feature>
<feature type="binding site">
    <location>
        <position position="385"/>
    </location>
    <ligand>
        <name>Cu(+)</name>
        <dbReference type="ChEBI" id="CHEBI:49552"/>
    </ligand>
</feature>
<feature type="binding site">
    <location>
        <position position="757"/>
    </location>
    <ligand>
        <name>Mo-molybdopterin cytosine dinucleotide</name>
        <dbReference type="ChEBI" id="CHEBI:71308"/>
    </ligand>
    <ligandPart>
        <name>Mo</name>
        <dbReference type="ChEBI" id="CHEBI:28685"/>
    </ligandPart>
</feature>
<feature type="modified residue" description="4-hydroxyarginine" evidence="3">
    <location>
        <position position="384"/>
    </location>
</feature>
<feature type="helix" evidence="5">
    <location>
        <begin position="8"/>
        <end position="15"/>
    </location>
</feature>
<feature type="helix" evidence="5">
    <location>
        <begin position="27"/>
        <end position="30"/>
    </location>
</feature>
<feature type="turn" evidence="5">
    <location>
        <begin position="31"/>
        <end position="33"/>
    </location>
</feature>
<feature type="helix" evidence="5">
    <location>
        <begin position="38"/>
        <end position="40"/>
    </location>
</feature>
<feature type="strand" evidence="5">
    <location>
        <begin position="47"/>
        <end position="53"/>
    </location>
</feature>
<feature type="strand" evidence="5">
    <location>
        <begin position="55"/>
        <end position="65"/>
    </location>
</feature>
<feature type="helix" evidence="5">
    <location>
        <begin position="67"/>
        <end position="71"/>
    </location>
</feature>
<feature type="strand" evidence="5">
    <location>
        <begin position="75"/>
        <end position="79"/>
    </location>
</feature>
<feature type="helix" evidence="5">
    <location>
        <begin position="81"/>
        <end position="84"/>
    </location>
</feature>
<feature type="helix" evidence="5">
    <location>
        <begin position="85"/>
        <end position="87"/>
    </location>
</feature>
<feature type="strand" evidence="5">
    <location>
        <begin position="90"/>
        <end position="93"/>
    </location>
</feature>
<feature type="strand" evidence="5">
    <location>
        <begin position="99"/>
        <end position="103"/>
    </location>
</feature>
<feature type="strand" evidence="5">
    <location>
        <begin position="106"/>
        <end position="108"/>
    </location>
</feature>
<feature type="strand" evidence="5">
    <location>
        <begin position="114"/>
        <end position="122"/>
    </location>
</feature>
<feature type="helix" evidence="5">
    <location>
        <begin position="123"/>
        <end position="132"/>
    </location>
</feature>
<feature type="strand" evidence="5">
    <location>
        <begin position="134"/>
        <end position="139"/>
    </location>
</feature>
<feature type="helix" evidence="5">
    <location>
        <begin position="146"/>
        <end position="149"/>
    </location>
</feature>
<feature type="helix" evidence="5">
    <location>
        <begin position="159"/>
        <end position="161"/>
    </location>
</feature>
<feature type="strand" evidence="4">
    <location>
        <begin position="168"/>
        <end position="171"/>
    </location>
</feature>
<feature type="strand" evidence="5">
    <location>
        <begin position="177"/>
        <end position="184"/>
    </location>
</feature>
<feature type="helix" evidence="5">
    <location>
        <begin position="186"/>
        <end position="195"/>
    </location>
</feature>
<feature type="strand" evidence="5">
    <location>
        <begin position="197"/>
        <end position="206"/>
    </location>
</feature>
<feature type="strand" evidence="5">
    <location>
        <begin position="218"/>
        <end position="224"/>
    </location>
</feature>
<feature type="turn" evidence="5">
    <location>
        <begin position="225"/>
        <end position="228"/>
    </location>
</feature>
<feature type="strand" evidence="5">
    <location>
        <begin position="229"/>
        <end position="234"/>
    </location>
</feature>
<feature type="helix" evidence="5">
    <location>
        <begin position="239"/>
        <end position="250"/>
    </location>
</feature>
<feature type="helix" evidence="5">
    <location>
        <begin position="254"/>
        <end position="256"/>
    </location>
</feature>
<feature type="strand" evidence="5">
    <location>
        <begin position="257"/>
        <end position="260"/>
    </location>
</feature>
<feature type="turn" evidence="5">
    <location>
        <begin position="268"/>
        <end position="271"/>
    </location>
</feature>
<feature type="helix" evidence="5">
    <location>
        <begin position="276"/>
        <end position="288"/>
    </location>
</feature>
<feature type="strand" evidence="5">
    <location>
        <begin position="292"/>
        <end position="295"/>
    </location>
</feature>
<feature type="helix" evidence="5">
    <location>
        <begin position="298"/>
        <end position="304"/>
    </location>
</feature>
<feature type="strand" evidence="5">
    <location>
        <begin position="311"/>
        <end position="319"/>
    </location>
</feature>
<feature type="strand" evidence="5">
    <location>
        <begin position="325"/>
        <end position="335"/>
    </location>
</feature>
<feature type="turn" evidence="5">
    <location>
        <begin position="349"/>
        <end position="352"/>
    </location>
</feature>
<feature type="helix" evidence="5">
    <location>
        <begin position="353"/>
        <end position="355"/>
    </location>
</feature>
<feature type="turn" evidence="5">
    <location>
        <begin position="356"/>
        <end position="359"/>
    </location>
</feature>
<feature type="strand" evidence="5">
    <location>
        <begin position="363"/>
        <end position="372"/>
    </location>
</feature>
<feature type="strand" evidence="5">
    <location>
        <begin position="379"/>
        <end position="381"/>
    </location>
</feature>
<feature type="turn" evidence="5">
    <location>
        <begin position="386"/>
        <end position="388"/>
    </location>
</feature>
<feature type="helix" evidence="5">
    <location>
        <begin position="389"/>
        <end position="407"/>
    </location>
</feature>
<feature type="helix" evidence="5">
    <location>
        <begin position="413"/>
        <end position="418"/>
    </location>
</feature>
<feature type="helix" evidence="5">
    <location>
        <begin position="422"/>
        <end position="424"/>
    </location>
</feature>
<feature type="strand" evidence="5">
    <location>
        <begin position="426"/>
        <end position="428"/>
    </location>
</feature>
<feature type="helix" evidence="5">
    <location>
        <begin position="440"/>
        <end position="451"/>
    </location>
</feature>
<feature type="helix" evidence="5">
    <location>
        <begin position="453"/>
        <end position="465"/>
    </location>
</feature>
<feature type="strand" evidence="5">
    <location>
        <begin position="470"/>
        <end position="481"/>
    </location>
</feature>
<feature type="turn" evidence="5">
    <location>
        <begin position="489"/>
        <end position="491"/>
    </location>
</feature>
<feature type="strand" evidence="5">
    <location>
        <begin position="497"/>
        <end position="499"/>
    </location>
</feature>
<feature type="strand" evidence="5">
    <location>
        <begin position="501"/>
        <end position="507"/>
    </location>
</feature>
<feature type="strand" evidence="5">
    <location>
        <begin position="513"/>
        <end position="518"/>
    </location>
</feature>
<feature type="strand" evidence="5">
    <location>
        <begin position="522"/>
        <end position="524"/>
    </location>
</feature>
<feature type="helix" evidence="5">
    <location>
        <begin position="526"/>
        <end position="538"/>
    </location>
</feature>
<feature type="helix" evidence="5">
    <location>
        <begin position="542"/>
        <end position="544"/>
    </location>
</feature>
<feature type="strand" evidence="5">
    <location>
        <begin position="545"/>
        <end position="548"/>
    </location>
</feature>
<feature type="turn" evidence="5">
    <location>
        <begin position="552"/>
        <end position="554"/>
    </location>
</feature>
<feature type="helix" evidence="5">
    <location>
        <begin position="566"/>
        <end position="592"/>
    </location>
</feature>
<feature type="helix" evidence="5">
    <location>
        <begin position="597"/>
        <end position="599"/>
    </location>
</feature>
<feature type="strand" evidence="5">
    <location>
        <begin position="600"/>
        <end position="602"/>
    </location>
</feature>
<feature type="strand" evidence="5">
    <location>
        <begin position="604"/>
        <end position="611"/>
    </location>
</feature>
<feature type="strand" evidence="5">
    <location>
        <begin position="616"/>
        <end position="618"/>
    </location>
</feature>
<feature type="helix" evidence="5">
    <location>
        <begin position="619"/>
        <end position="628"/>
    </location>
</feature>
<feature type="strand" evidence="5">
    <location>
        <begin position="636"/>
        <end position="644"/>
    </location>
</feature>
<feature type="strand" evidence="5">
    <location>
        <begin position="653"/>
        <end position="663"/>
    </location>
</feature>
<feature type="turn" evidence="5">
    <location>
        <begin position="664"/>
        <end position="666"/>
    </location>
</feature>
<feature type="strand" evidence="5">
    <location>
        <begin position="669"/>
        <end position="679"/>
    </location>
</feature>
<feature type="helix" evidence="5">
    <location>
        <begin position="686"/>
        <end position="705"/>
    </location>
</feature>
<feature type="turn" evidence="5">
    <location>
        <begin position="722"/>
        <end position="724"/>
    </location>
</feature>
<feature type="turn" evidence="5">
    <location>
        <begin position="730"/>
        <end position="732"/>
    </location>
</feature>
<feature type="strand" evidence="5">
    <location>
        <begin position="737"/>
        <end position="740"/>
    </location>
</feature>
<feature type="helix" evidence="5">
    <location>
        <begin position="758"/>
        <end position="775"/>
    </location>
</feature>
<feature type="helix" evidence="5">
    <location>
        <begin position="776"/>
        <end position="778"/>
    </location>
</feature>
<feature type="helix" evidence="5">
    <location>
        <begin position="789"/>
        <end position="798"/>
    </location>
</feature>
<protein>
    <recommendedName>
        <fullName>Carbon monoxide dehydrogenase large chain</fullName>
        <shortName>CO dehydrogenase subunit L</shortName>
        <shortName>CO-DH L</shortName>
        <ecNumber evidence="1">1.2.5.3</ecNumber>
    </recommendedName>
</protein>
<comment type="function">
    <text evidence="1">Catalyzes the oxidation of carbon monoxide to carbon dioxide.</text>
</comment>
<comment type="catalytic activity">
    <reaction evidence="1">
        <text>CO + a quinone + H2O = a quinol + CO2</text>
        <dbReference type="Rhea" id="RHEA:48880"/>
        <dbReference type="ChEBI" id="CHEBI:15377"/>
        <dbReference type="ChEBI" id="CHEBI:16526"/>
        <dbReference type="ChEBI" id="CHEBI:17245"/>
        <dbReference type="ChEBI" id="CHEBI:24646"/>
        <dbReference type="ChEBI" id="CHEBI:132124"/>
        <dbReference type="EC" id="1.2.5.3"/>
    </reaction>
</comment>
<comment type="cofactor">
    <cofactor>
        <name>Cu(+)</name>
        <dbReference type="ChEBI" id="CHEBI:49552"/>
    </cofactor>
    <text>Binds 1 Cu(+) ion per subunit.</text>
</comment>
<comment type="cofactor">
    <cofactor evidence="2">
        <name>Mo-molybdopterin cytosine dinucleotide</name>
        <dbReference type="ChEBI" id="CHEBI:71308"/>
    </cofactor>
    <text evidence="2">Binds 1 Mo-molybdopterin cytosine dinucleotide (Mo-MCD) cofactor per subunit.</text>
</comment>
<comment type="subunit">
    <text evidence="2">Dimer of heterotrimers. Each heterotrimer consists of a large, a medium and a small subunit.</text>
</comment>
<organism>
    <name type="scientific">Hydrogenophaga pseudoflava</name>
    <name type="common">Pseudomonas carboxydoflava</name>
    <dbReference type="NCBI Taxonomy" id="47421"/>
    <lineage>
        <taxon>Bacteria</taxon>
        <taxon>Pseudomonadati</taxon>
        <taxon>Pseudomonadota</taxon>
        <taxon>Betaproteobacteria</taxon>
        <taxon>Burkholderiales</taxon>
        <taxon>Comamonadaceae</taxon>
        <taxon>Hydrogenophaga</taxon>
    </lineage>
</organism>
<accession>P19913</accession>
<accession>Q9RBR9</accession>
<keyword id="KW-0002">3D-structure</keyword>
<keyword id="KW-0186">Copper</keyword>
<keyword id="KW-0903">Direct protein sequencing</keyword>
<keyword id="KW-0379">Hydroxylation</keyword>
<keyword id="KW-0479">Metal-binding</keyword>
<keyword id="KW-0500">Molybdenum</keyword>
<keyword id="KW-0560">Oxidoreductase</keyword>
<proteinExistence type="evidence at protein level"/>
<gene>
    <name type="primary">cutL</name>
</gene>
<evidence type="ECO:0000250" key="1">
    <source>
        <dbReference type="UniProtKB" id="P19919"/>
    </source>
</evidence>
<evidence type="ECO:0000269" key="2">
    <source>
    </source>
</evidence>
<evidence type="ECO:0000269" key="3">
    <source>
    </source>
</evidence>
<evidence type="ECO:0007829" key="4">
    <source>
        <dbReference type="PDB" id="1FFU"/>
    </source>
</evidence>
<evidence type="ECO:0007829" key="5">
    <source>
        <dbReference type="PDB" id="1FFV"/>
    </source>
</evidence>
<dbReference type="EC" id="1.2.5.3" evidence="1"/>
<dbReference type="EMBL" id="U80806">
    <property type="protein sequence ID" value="AAD00363.1"/>
    <property type="molecule type" value="Genomic_DNA"/>
</dbReference>
<dbReference type="PIR" id="PL0139">
    <property type="entry name" value="PL0139"/>
</dbReference>
<dbReference type="PDB" id="1FFU">
    <property type="method" value="X-ray"/>
    <property type="resolution" value="2.35 A"/>
    <property type="chains" value="B/E=1-803"/>
</dbReference>
<dbReference type="PDB" id="1FFV">
    <property type="method" value="X-ray"/>
    <property type="resolution" value="2.25 A"/>
    <property type="chains" value="B/E=1-803"/>
</dbReference>
<dbReference type="PDBsum" id="1FFU"/>
<dbReference type="PDBsum" id="1FFV"/>
<dbReference type="SMR" id="P19913"/>
<dbReference type="BRENDA" id="1.2.5.3">
    <property type="organism ID" value="2729"/>
</dbReference>
<dbReference type="EvolutionaryTrace" id="P19913"/>
<dbReference type="GO" id="GO:0043885">
    <property type="term" value="F:anaerobic carbon-monoxide dehydrogenase activity"/>
    <property type="evidence" value="ECO:0007669"/>
    <property type="project" value="InterPro"/>
</dbReference>
<dbReference type="GO" id="GO:0008805">
    <property type="term" value="F:carbon-monoxide oxygenase activity"/>
    <property type="evidence" value="ECO:0007669"/>
    <property type="project" value="UniProtKB-EC"/>
</dbReference>
<dbReference type="GO" id="GO:0005507">
    <property type="term" value="F:copper ion binding"/>
    <property type="evidence" value="ECO:0007669"/>
    <property type="project" value="InterPro"/>
</dbReference>
<dbReference type="GO" id="GO:0005506">
    <property type="term" value="F:iron ion binding"/>
    <property type="evidence" value="ECO:0007669"/>
    <property type="project" value="InterPro"/>
</dbReference>
<dbReference type="GO" id="GO:0030151">
    <property type="term" value="F:molybdenum ion binding"/>
    <property type="evidence" value="ECO:0007669"/>
    <property type="project" value="InterPro"/>
</dbReference>
<dbReference type="FunFam" id="3.30.365.10:FF:000005">
    <property type="entry name" value="Carbon monoxide dehydrogenase large chain"/>
    <property type="match status" value="1"/>
</dbReference>
<dbReference type="FunFam" id="3.90.1170.50:FF:000006">
    <property type="entry name" value="Carbon monoxide dehydrogenase large chain"/>
    <property type="match status" value="1"/>
</dbReference>
<dbReference type="FunFam" id="3.30.365.10:FF:000001">
    <property type="entry name" value="Xanthine dehydrogenase oxidase"/>
    <property type="match status" value="1"/>
</dbReference>
<dbReference type="Gene3D" id="3.90.1170.50">
    <property type="entry name" value="Aldehyde oxidase/xanthine dehydrogenase, a/b hammerhead"/>
    <property type="match status" value="1"/>
</dbReference>
<dbReference type="Gene3D" id="3.30.365.10">
    <property type="entry name" value="Aldehyde oxidase/xanthine dehydrogenase, molybdopterin binding domain"/>
    <property type="match status" value="4"/>
</dbReference>
<dbReference type="InterPro" id="IPR000674">
    <property type="entry name" value="Ald_Oxase/Xan_DH_a/b"/>
</dbReference>
<dbReference type="InterPro" id="IPR036856">
    <property type="entry name" value="Ald_Oxase/Xan_DH_a/b_sf"/>
</dbReference>
<dbReference type="InterPro" id="IPR016208">
    <property type="entry name" value="Ald_Oxase/xanthine_DH-like"/>
</dbReference>
<dbReference type="InterPro" id="IPR008274">
    <property type="entry name" value="AldOxase/xan_DH_MoCoBD1"/>
</dbReference>
<dbReference type="InterPro" id="IPR046867">
    <property type="entry name" value="AldOxase/xan_DH_MoCoBD2"/>
</dbReference>
<dbReference type="InterPro" id="IPR037165">
    <property type="entry name" value="AldOxase/xan_DH_Mopterin-bd_sf"/>
</dbReference>
<dbReference type="InterPro" id="IPR012780">
    <property type="entry name" value="CO_Mo_DH_lsu"/>
</dbReference>
<dbReference type="NCBIfam" id="TIGR02416">
    <property type="entry name" value="CO_dehy_Mo_lg"/>
    <property type="match status" value="1"/>
</dbReference>
<dbReference type="PANTHER" id="PTHR11908:SF132">
    <property type="entry name" value="ALDEHYDE OXIDASE 1-RELATED"/>
    <property type="match status" value="1"/>
</dbReference>
<dbReference type="PANTHER" id="PTHR11908">
    <property type="entry name" value="XANTHINE DEHYDROGENASE"/>
    <property type="match status" value="1"/>
</dbReference>
<dbReference type="Pfam" id="PF01315">
    <property type="entry name" value="Ald_Xan_dh_C"/>
    <property type="match status" value="1"/>
</dbReference>
<dbReference type="Pfam" id="PF02738">
    <property type="entry name" value="MoCoBD_1"/>
    <property type="match status" value="1"/>
</dbReference>
<dbReference type="Pfam" id="PF20256">
    <property type="entry name" value="MoCoBD_2"/>
    <property type="match status" value="1"/>
</dbReference>
<dbReference type="SMART" id="SM01008">
    <property type="entry name" value="Ald_Xan_dh_C"/>
    <property type="match status" value="1"/>
</dbReference>
<dbReference type="SUPFAM" id="SSF54665">
    <property type="entry name" value="CO dehydrogenase molybdoprotein N-domain-like"/>
    <property type="match status" value="1"/>
</dbReference>
<dbReference type="SUPFAM" id="SSF56003">
    <property type="entry name" value="Molybdenum cofactor-binding domain"/>
    <property type="match status" value="1"/>
</dbReference>